<keyword id="KW-0416">Keratin</keyword>
<keyword id="KW-1185">Reference proteome</keyword>
<keyword id="KW-0677">Repeat</keyword>
<dbReference type="EMBL" id="AB096960">
    <property type="protein sequence ID" value="BAE46375.1"/>
    <property type="molecule type" value="mRNA"/>
</dbReference>
<dbReference type="EMBL" id="BC105029">
    <property type="protein sequence ID" value="AAI05030.1"/>
    <property type="molecule type" value="mRNA"/>
</dbReference>
<dbReference type="EMBL" id="BC105031">
    <property type="protein sequence ID" value="AAI05032.1"/>
    <property type="molecule type" value="mRNA"/>
</dbReference>
<dbReference type="CCDS" id="CCDS13606.1"/>
<dbReference type="RefSeq" id="NP_853650.1">
    <property type="nucleotide sequence ID" value="NM_181619.2"/>
</dbReference>
<dbReference type="FunCoup" id="Q3LI58">
    <property type="interactions" value="1"/>
</dbReference>
<dbReference type="STRING" id="9606.ENSP00000335566"/>
<dbReference type="BioMuta" id="KRTAP21-1"/>
<dbReference type="PaxDb" id="9606-ENSP00000335566"/>
<dbReference type="PeptideAtlas" id="Q3LI58"/>
<dbReference type="DNASU" id="337977"/>
<dbReference type="Ensembl" id="ENST00000335093.5">
    <property type="protein sequence ID" value="ENSP00000335566.3"/>
    <property type="gene ID" value="ENSG00000187005.5"/>
</dbReference>
<dbReference type="GeneID" id="337977"/>
<dbReference type="KEGG" id="hsa:337977"/>
<dbReference type="MANE-Select" id="ENST00000335093.5">
    <property type="protein sequence ID" value="ENSP00000335566.3"/>
    <property type="RefSeq nucleotide sequence ID" value="NM_181619.2"/>
    <property type="RefSeq protein sequence ID" value="NP_853650.1"/>
</dbReference>
<dbReference type="UCSC" id="uc011adi.3">
    <property type="organism name" value="human"/>
</dbReference>
<dbReference type="AGR" id="HGNC:18945"/>
<dbReference type="CTD" id="337977"/>
<dbReference type="GeneCards" id="KRTAP21-1"/>
<dbReference type="HGNC" id="HGNC:18945">
    <property type="gene designation" value="KRTAP21-1"/>
</dbReference>
<dbReference type="HPA" id="ENSG00000187005">
    <property type="expression patterns" value="Not detected"/>
</dbReference>
<dbReference type="neXtProt" id="NX_Q3LI58"/>
<dbReference type="OpenTargets" id="ENSG00000187005"/>
<dbReference type="PharmGKB" id="PA134897035"/>
<dbReference type="VEuPathDB" id="HostDB:ENSG00000187005"/>
<dbReference type="eggNOG" id="ENOG502T35A">
    <property type="taxonomic scope" value="Eukaryota"/>
</dbReference>
<dbReference type="GeneTree" id="ENSGT01090000260341"/>
<dbReference type="HOGENOM" id="CLU_140099_1_0_1"/>
<dbReference type="InParanoid" id="Q3LI58"/>
<dbReference type="OMA" id="YGSAYGC"/>
<dbReference type="PAN-GO" id="Q3LI58">
    <property type="GO annotations" value="1 GO annotation based on evolutionary models"/>
</dbReference>
<dbReference type="PathwayCommons" id="Q3LI58"/>
<dbReference type="Reactome" id="R-HSA-6805567">
    <property type="pathway name" value="Keratinization"/>
</dbReference>
<dbReference type="BioGRID-ORCS" id="337977">
    <property type="hits" value="214 hits in 1057 CRISPR screens"/>
</dbReference>
<dbReference type="GenomeRNAi" id="337977"/>
<dbReference type="Pharos" id="Q3LI58">
    <property type="development level" value="Tdark"/>
</dbReference>
<dbReference type="PRO" id="PR:Q3LI58"/>
<dbReference type="Proteomes" id="UP000005640">
    <property type="component" value="Chromosome 21"/>
</dbReference>
<dbReference type="RNAct" id="Q3LI58">
    <property type="molecule type" value="protein"/>
</dbReference>
<dbReference type="Bgee" id="ENSG00000187005">
    <property type="expression patterns" value="Expressed in male germ line stem cell (sensu Vertebrata) in testis and 10 other cell types or tissues"/>
</dbReference>
<dbReference type="GO" id="GO:0005829">
    <property type="term" value="C:cytosol"/>
    <property type="evidence" value="ECO:0000304"/>
    <property type="project" value="Reactome"/>
</dbReference>
<dbReference type="GO" id="GO:0005882">
    <property type="term" value="C:intermediate filament"/>
    <property type="evidence" value="ECO:0007669"/>
    <property type="project" value="UniProtKB-KW"/>
</dbReference>
<evidence type="ECO:0000250" key="1"/>
<evidence type="ECO:0000269" key="2">
    <source>
    </source>
</evidence>
<proteinExistence type="inferred from homology"/>
<name>KR211_HUMAN</name>
<accession>Q3LI58</accession>
<sequence>MCCNYYGNSCGYGSGCGCGYGSGSGCGCGYGTGYGCGYGCGFGSHYGCGYGTGYGCGYGSGSGYCGYRPFCFRRCYSSC</sequence>
<protein>
    <recommendedName>
        <fullName>Keratin-associated protein 21-1</fullName>
    </recommendedName>
</protein>
<reference key="1">
    <citation type="submission" date="2002-11" db="EMBL/GenBank/DDBJ databases">
        <title>Identification of complete keratin-associated protein (KAP) gene cluster spanning 800 kb region on human chromosome 21q22.11.</title>
        <authorList>
            <person name="Obayashi I."/>
            <person name="Shibuya K."/>
            <person name="Minoshima S."/>
            <person name="Kudoh J."/>
            <person name="Shimizu N."/>
        </authorList>
    </citation>
    <scope>NUCLEOTIDE SEQUENCE [MRNA]</scope>
    <source>
        <tissue>Hair root</tissue>
    </source>
</reference>
<reference key="2">
    <citation type="journal article" date="2004" name="Genome Res.">
        <title>The status, quality, and expansion of the NIH full-length cDNA project: the Mammalian Gene Collection (MGC).</title>
        <authorList>
            <consortium name="The MGC Project Team"/>
        </authorList>
    </citation>
    <scope>NUCLEOTIDE SEQUENCE [LARGE SCALE MRNA]</scope>
</reference>
<reference key="3">
    <citation type="journal article" date="2006" name="Science">
        <title>The consensus coding sequences of human breast and colorectal cancers.</title>
        <authorList>
            <person name="Sjoeblom T."/>
            <person name="Jones S."/>
            <person name="Wood L.D."/>
            <person name="Parsons D.W."/>
            <person name="Lin J."/>
            <person name="Barber T.D."/>
            <person name="Mandelker D."/>
            <person name="Leary R.J."/>
            <person name="Ptak J."/>
            <person name="Silliman N."/>
            <person name="Szabo S."/>
            <person name="Buckhaults P."/>
            <person name="Farrell C."/>
            <person name="Meeh P."/>
            <person name="Markowitz S.D."/>
            <person name="Willis J."/>
            <person name="Dawson D."/>
            <person name="Willson J.K.V."/>
            <person name="Gazdar A.F."/>
            <person name="Hartigan J."/>
            <person name="Wu L."/>
            <person name="Liu C."/>
            <person name="Parmigiani G."/>
            <person name="Park B.H."/>
            <person name="Bachman K.E."/>
            <person name="Papadopoulos N."/>
            <person name="Vogelstein B."/>
            <person name="Kinzler K.W."/>
            <person name="Velculescu V.E."/>
        </authorList>
    </citation>
    <scope>VARIANT [LARGE SCALE ANALYSIS] SER-15</scope>
</reference>
<gene>
    <name type="primary">KRTAP21-1</name>
    <name type="synonym">KAP21.1</name>
</gene>
<organism>
    <name type="scientific">Homo sapiens</name>
    <name type="common">Human</name>
    <dbReference type="NCBI Taxonomy" id="9606"/>
    <lineage>
        <taxon>Eukaryota</taxon>
        <taxon>Metazoa</taxon>
        <taxon>Chordata</taxon>
        <taxon>Craniata</taxon>
        <taxon>Vertebrata</taxon>
        <taxon>Euteleostomi</taxon>
        <taxon>Mammalia</taxon>
        <taxon>Eutheria</taxon>
        <taxon>Euarchontoglires</taxon>
        <taxon>Primates</taxon>
        <taxon>Haplorrhini</taxon>
        <taxon>Catarrhini</taxon>
        <taxon>Hominidae</taxon>
        <taxon>Homo</taxon>
    </lineage>
</organism>
<comment type="function">
    <text>In the hair cortex, hair keratin intermediate filaments are embedded in an interfilamentous matrix, consisting of hair keratin-associated proteins (KRTAP), which are essential for the formation of a rigid and resistant hair shaft through their extensive disulfide bond cross-linking with abundant cysteine residues of hair keratins. The matrix proteins include the high-sulfur and high-glycine-tyrosine keratins.</text>
</comment>
<comment type="subunit">
    <text evidence="1">Interacts with hair keratins.</text>
</comment>
<feature type="chain" id="PRO_0000223912" description="Keratin-associated protein 21-1">
    <location>
        <begin position="1"/>
        <end position="79"/>
    </location>
</feature>
<feature type="sequence variant" id="VAR_036563" description="In a breast cancer sample; somatic mutation; dbSNP:rs757919425." evidence="2">
    <original>G</original>
    <variation>S</variation>
    <location>
        <position position="15"/>
    </location>
</feature>